<sequence>MTTGRNNRVMMEGVGARVIRGPDWKWGKQDGGEGHVGTVRSFESPEEVVVVWDNGTAANYRCSGAYDVRILDSAPTGIKHDGTMCDTCRQQPIIGIRWKCAECTNYDLCTTCYHGDKHHLRHRFYRITTPGSERVLLESRRKSKKITARGIFAGGRVVRGVDWQWEDQDGGNGRRGKVTEIQDWSAASPHSAAYVLWDNGAKNLYRVGFEGMSDLKCVQDAKGGTFYRDHCPVLGEQNGNRNPGGLQIGDLVNIDLDLEIVQSLQHGHGGWTDGMFETLTTTGTVCGIDEDHDIVVQYPSGNRWTFNPAVLTKANVVRSGEVAAGAEGGSSQFMVGDLVQICYDIDRIKLLQRGHGEWAEAMLPTLGKVGRVQQIYSDSDLKVEVCGTSWTYNPAAVTKVAPAGSAVTNASGERLSQLLKKLFETQESGDINEELVKAAANGDLAKVEDILKRPDVDVNGQCAGHTAMQAASQNGHVDVLKLLLKHSVDLEAEDKDGDRAVHHASFGDEGSVIEVLHRGGADLNARNKRRQTPLHIAVNKGHLQVVKTLLDFGCHPSLQDSEGDTPLHDAISKKRDDMLSVLLEAGADVTITNNNGFNALHHAALRGNPSAMRVLLSKLPRPWIVDEKKDDGYTALHLAALNNHVEVAELLVHQGNANLDVQNVNQQTALHLAVERQHTQIVRLLVRAEAKLDVQDKDGDTPLHEALRHHTLSQLRQLQDMQDVSKVEPWEPSKNTLIMGLGTQGAEKKSAASIACFLAANGADLTIRNKKGQSPLDLCPDPSLCKALAKCHKEKTSGQVGSRSPSLNSNNETLEECMVCSDMKRDTLFGPCGHIATCSLCSPRVKKCLICKEQVQSRTKIEECVVCSDKKAAVLFQPCGHMCACENCASLMKKCVQCRAVVERRTPFVLCCGGKGMEDATDDEDLTGGSNSMAGGSQDLLQPNNLALSWSSGNIPALQRDKDNTNVNADVQKLQQQLQDIKEQTMCPVCLDRLKNMIFMCGHGTCQLCGDRMSECPICRKAIERRILLY</sequence>
<feature type="chain" id="PRO_0000055945" description="E3 ubiquitin-protein ligase mib1">
    <location>
        <begin position="1"/>
        <end position="1030"/>
    </location>
</feature>
<feature type="domain" description="MIB/HERC2 1" evidence="5">
    <location>
        <begin position="6"/>
        <end position="74"/>
    </location>
</feature>
<feature type="domain" description="MIB/HERC2 2" evidence="5">
    <location>
        <begin position="143"/>
        <end position="221"/>
    </location>
</feature>
<feature type="repeat" description="ANK 1">
    <location>
        <begin position="430"/>
        <end position="460"/>
    </location>
</feature>
<feature type="repeat" description="ANK 2">
    <location>
        <begin position="463"/>
        <end position="492"/>
    </location>
</feature>
<feature type="repeat" description="ANK 3">
    <location>
        <begin position="496"/>
        <end position="525"/>
    </location>
</feature>
<feature type="repeat" description="ANK 4">
    <location>
        <begin position="529"/>
        <end position="558"/>
    </location>
</feature>
<feature type="repeat" description="ANK 5">
    <location>
        <begin position="562"/>
        <end position="591"/>
    </location>
</feature>
<feature type="repeat" description="ANK 6">
    <location>
        <begin position="595"/>
        <end position="627"/>
    </location>
</feature>
<feature type="repeat" description="ANK 7">
    <location>
        <begin position="631"/>
        <end position="661"/>
    </location>
</feature>
<feature type="repeat" description="ANK 8">
    <location>
        <begin position="665"/>
        <end position="694"/>
    </location>
</feature>
<feature type="repeat" description="ANK 9">
    <location>
        <begin position="698"/>
        <end position="727"/>
    </location>
</feature>
<feature type="zinc finger region" description="ZZ-type" evidence="4">
    <location>
        <begin position="80"/>
        <end position="132"/>
    </location>
</feature>
<feature type="zinc finger region" description="RING-type 1" evidence="3">
    <location>
        <begin position="817"/>
        <end position="852"/>
    </location>
</feature>
<feature type="zinc finger region" description="RING-type 2" evidence="3">
    <location>
        <begin position="864"/>
        <end position="899"/>
    </location>
</feature>
<feature type="zinc finger region" description="RING-type 3" evidence="3">
    <location>
        <begin position="987"/>
        <end position="1020"/>
    </location>
</feature>
<feature type="coiled-coil region" evidence="2">
    <location>
        <begin position="957"/>
        <end position="986"/>
    </location>
</feature>
<feature type="binding site" evidence="4">
    <location>
        <position position="85"/>
    </location>
    <ligand>
        <name>Zn(2+)</name>
        <dbReference type="ChEBI" id="CHEBI:29105"/>
        <label>1</label>
    </ligand>
</feature>
<feature type="binding site" evidence="4">
    <location>
        <position position="88"/>
    </location>
    <ligand>
        <name>Zn(2+)</name>
        <dbReference type="ChEBI" id="CHEBI:29105"/>
        <label>1</label>
    </ligand>
</feature>
<feature type="binding site" evidence="4">
    <location>
        <position position="100"/>
    </location>
    <ligand>
        <name>Zn(2+)</name>
        <dbReference type="ChEBI" id="CHEBI:29105"/>
        <label>2</label>
    </ligand>
</feature>
<feature type="binding site" evidence="4">
    <location>
        <position position="103"/>
    </location>
    <ligand>
        <name>Zn(2+)</name>
        <dbReference type="ChEBI" id="CHEBI:29105"/>
        <label>2</label>
    </ligand>
</feature>
<feature type="binding site" evidence="4">
    <location>
        <position position="109"/>
    </location>
    <ligand>
        <name>Zn(2+)</name>
        <dbReference type="ChEBI" id="CHEBI:29105"/>
        <label>1</label>
    </ligand>
</feature>
<feature type="binding site" evidence="4">
    <location>
        <position position="112"/>
    </location>
    <ligand>
        <name>Zn(2+)</name>
        <dbReference type="ChEBI" id="CHEBI:29105"/>
        <label>1</label>
    </ligand>
</feature>
<feature type="binding site" evidence="4">
    <location>
        <position position="118"/>
    </location>
    <ligand>
        <name>Zn(2+)</name>
        <dbReference type="ChEBI" id="CHEBI:29105"/>
        <label>2</label>
    </ligand>
</feature>
<feature type="binding site" evidence="4">
    <location>
        <position position="122"/>
    </location>
    <ligand>
        <name>Zn(2+)</name>
        <dbReference type="ChEBI" id="CHEBI:29105"/>
        <label>2</label>
    </ligand>
</feature>
<feature type="mutagenesis site" description="In tfi101; induces neurogenic defects due to reduced notch signaling." evidence="8">
    <original>C</original>
    <variation>S</variation>
    <location>
        <position position="1009"/>
    </location>
</feature>
<feature type="mutagenesis site" description="In ta52b; induces neurogenic defects due to reduced notch signaling." evidence="8">
    <original>M</original>
    <variation>R</variation>
    <location>
        <position position="1013"/>
    </location>
</feature>
<feature type="sequence conflict" description="In Ref. 2; AAM34677." evidence="13" ref="2">
    <original>EQ</original>
    <variation>KI</variation>
    <location>
        <begin position="236"/>
        <end position="237"/>
    </location>
</feature>
<dbReference type="EC" id="2.3.2.27"/>
<dbReference type="EMBL" id="AF537301">
    <property type="protein sequence ID" value="AAO37830.1"/>
    <property type="molecule type" value="mRNA"/>
</dbReference>
<dbReference type="EMBL" id="AF506233">
    <property type="protein sequence ID" value="AAM34677.1"/>
    <property type="molecule type" value="mRNA"/>
</dbReference>
<dbReference type="RefSeq" id="NP_775393.2">
    <property type="nucleotide sequence ID" value="NM_173286.3"/>
</dbReference>
<dbReference type="SMR" id="Q804S5"/>
<dbReference type="BioGRID" id="87906">
    <property type="interactions" value="62"/>
</dbReference>
<dbReference type="FunCoup" id="Q804S5">
    <property type="interactions" value="2218"/>
</dbReference>
<dbReference type="STRING" id="7955.ENSDARP00000132570"/>
<dbReference type="PaxDb" id="7955-ENSDARP00000109025"/>
<dbReference type="PeptideAtlas" id="Q804S5"/>
<dbReference type="Ensembl" id="ENSDART00000165634">
    <property type="protein sequence ID" value="ENSDARP00000139883"/>
    <property type="gene ID" value="ENSDARG00000102184"/>
</dbReference>
<dbReference type="GeneID" id="352910"/>
<dbReference type="KEGG" id="dre:352910"/>
<dbReference type="AGR" id="ZFIN:ZDB-GENE-030404-2"/>
<dbReference type="CTD" id="57534"/>
<dbReference type="ZFIN" id="ZDB-GENE-030404-2">
    <property type="gene designation" value="mib1"/>
</dbReference>
<dbReference type="eggNOG" id="KOG0504">
    <property type="taxonomic scope" value="Eukaryota"/>
</dbReference>
<dbReference type="eggNOG" id="KOG4582">
    <property type="taxonomic scope" value="Eukaryota"/>
</dbReference>
<dbReference type="HOGENOM" id="CLU_007287_1_0_1"/>
<dbReference type="InParanoid" id="Q804S5"/>
<dbReference type="OrthoDB" id="2122982at2759"/>
<dbReference type="SignaLink" id="Q804S5"/>
<dbReference type="UniPathway" id="UPA00143"/>
<dbReference type="PRO" id="PR:Q804S5"/>
<dbReference type="Proteomes" id="UP000000437">
    <property type="component" value="Chromosome 2"/>
</dbReference>
<dbReference type="Bgee" id="ENSDARG00000102184">
    <property type="expression patterns" value="Expressed in muscle tissue and 28 other cell types or tissues"/>
</dbReference>
<dbReference type="ExpressionAtlas" id="Q804S5">
    <property type="expression patterns" value="baseline"/>
</dbReference>
<dbReference type="GO" id="GO:0034451">
    <property type="term" value="C:centriolar satellite"/>
    <property type="evidence" value="ECO:0007669"/>
    <property type="project" value="UniProtKB-SubCell"/>
</dbReference>
<dbReference type="GO" id="GO:0005737">
    <property type="term" value="C:cytoplasm"/>
    <property type="evidence" value="ECO:0000314"/>
    <property type="project" value="ZFIN"/>
</dbReference>
<dbReference type="GO" id="GO:0031410">
    <property type="term" value="C:cytoplasmic vesicle"/>
    <property type="evidence" value="ECO:0000314"/>
    <property type="project" value="ZFIN"/>
</dbReference>
<dbReference type="GO" id="GO:0030139">
    <property type="term" value="C:endocytic vesicle"/>
    <property type="evidence" value="ECO:0000314"/>
    <property type="project" value="ZFIN"/>
</dbReference>
<dbReference type="GO" id="GO:0048471">
    <property type="term" value="C:perinuclear region of cytoplasm"/>
    <property type="evidence" value="ECO:0000316"/>
    <property type="project" value="ZFIN"/>
</dbReference>
<dbReference type="GO" id="GO:0005886">
    <property type="term" value="C:plasma membrane"/>
    <property type="evidence" value="ECO:0007669"/>
    <property type="project" value="UniProtKB-SubCell"/>
</dbReference>
<dbReference type="GO" id="GO:0032991">
    <property type="term" value="C:protein-containing complex"/>
    <property type="evidence" value="ECO:0000353"/>
    <property type="project" value="ZFIN"/>
</dbReference>
<dbReference type="GO" id="GO:0000151">
    <property type="term" value="C:ubiquitin ligase complex"/>
    <property type="evidence" value="ECO:0000305"/>
    <property type="project" value="ZFIN"/>
</dbReference>
<dbReference type="GO" id="GO:0042802">
    <property type="term" value="F:identical protein binding"/>
    <property type="evidence" value="ECO:0000353"/>
    <property type="project" value="ZFIN"/>
</dbReference>
<dbReference type="GO" id="GO:0061630">
    <property type="term" value="F:ubiquitin protein ligase activity"/>
    <property type="evidence" value="ECO:0000318"/>
    <property type="project" value="GO_Central"/>
</dbReference>
<dbReference type="GO" id="GO:0004842">
    <property type="term" value="F:ubiquitin-protein transferase activity"/>
    <property type="evidence" value="ECO:0000314"/>
    <property type="project" value="ZFIN"/>
</dbReference>
<dbReference type="GO" id="GO:0008270">
    <property type="term" value="F:zinc ion binding"/>
    <property type="evidence" value="ECO:0007669"/>
    <property type="project" value="UniProtKB-KW"/>
</dbReference>
<dbReference type="GO" id="GO:0048899">
    <property type="term" value="P:anterior lateral line development"/>
    <property type="evidence" value="ECO:0000315"/>
    <property type="project" value="ZFIN"/>
</dbReference>
<dbReference type="GO" id="GO:0001568">
    <property type="term" value="P:blood vessel development"/>
    <property type="evidence" value="ECO:0000315"/>
    <property type="project" value="ZFIN"/>
</dbReference>
<dbReference type="GO" id="GO:0048514">
    <property type="term" value="P:blood vessel morphogenesis"/>
    <property type="evidence" value="ECO:0000315"/>
    <property type="project" value="ZFIN"/>
</dbReference>
<dbReference type="GO" id="GO:0007420">
    <property type="term" value="P:brain development"/>
    <property type="evidence" value="ECO:0000315"/>
    <property type="project" value="ZFIN"/>
</dbReference>
<dbReference type="GO" id="GO:0007417">
    <property type="term" value="P:central nervous system development"/>
    <property type="evidence" value="ECO:0000315"/>
    <property type="project" value="ZFIN"/>
</dbReference>
<dbReference type="GO" id="GO:0060216">
    <property type="term" value="P:definitive hemopoiesis"/>
    <property type="evidence" value="ECO:0000315"/>
    <property type="project" value="ZFIN"/>
</dbReference>
<dbReference type="GO" id="GO:0007368">
    <property type="term" value="P:determination of left/right symmetry"/>
    <property type="evidence" value="ECO:0000315"/>
    <property type="project" value="ZFIN"/>
</dbReference>
<dbReference type="GO" id="GO:0048066">
    <property type="term" value="P:developmental pigmentation"/>
    <property type="evidence" value="ECO:0000315"/>
    <property type="project" value="ZFIN"/>
</dbReference>
<dbReference type="GO" id="GO:0021536">
    <property type="term" value="P:diencephalon development"/>
    <property type="evidence" value="ECO:0000315"/>
    <property type="project" value="ZFIN"/>
</dbReference>
<dbReference type="GO" id="GO:0048546">
    <property type="term" value="P:digestive tract morphogenesis"/>
    <property type="evidence" value="ECO:0000315"/>
    <property type="project" value="ZFIN"/>
</dbReference>
<dbReference type="GO" id="GO:0031076">
    <property type="term" value="P:embryonic camera-type eye development"/>
    <property type="evidence" value="ECO:0000315"/>
    <property type="project" value="ZFIN"/>
</dbReference>
<dbReference type="GO" id="GO:0009880">
    <property type="term" value="P:embryonic pattern specification"/>
    <property type="evidence" value="ECO:0000315"/>
    <property type="project" value="ZFIN"/>
</dbReference>
<dbReference type="GO" id="GO:0006897">
    <property type="term" value="P:endocytosis"/>
    <property type="evidence" value="ECO:0000318"/>
    <property type="project" value="GO_Central"/>
</dbReference>
<dbReference type="GO" id="GO:0001885">
    <property type="term" value="P:endothelial cell development"/>
    <property type="evidence" value="ECO:0000315"/>
    <property type="project" value="ZFIN"/>
</dbReference>
<dbReference type="GO" id="GO:0009913">
    <property type="term" value="P:epidermal cell differentiation"/>
    <property type="evidence" value="ECO:0000315"/>
    <property type="project" value="ZFIN"/>
</dbReference>
<dbReference type="GO" id="GO:0002064">
    <property type="term" value="P:epithelial cell development"/>
    <property type="evidence" value="ECO:0000315"/>
    <property type="project" value="ZFIN"/>
</dbReference>
<dbReference type="GO" id="GO:0021508">
    <property type="term" value="P:floor plate formation"/>
    <property type="evidence" value="ECO:0000315"/>
    <property type="project" value="ZFIN"/>
</dbReference>
<dbReference type="GO" id="GO:0048859">
    <property type="term" value="P:formation of anatomical boundary"/>
    <property type="evidence" value="ECO:0000315"/>
    <property type="project" value="ZFIN"/>
</dbReference>
<dbReference type="GO" id="GO:0048699">
    <property type="term" value="P:generation of neurons"/>
    <property type="evidence" value="ECO:0000315"/>
    <property type="project" value="ZFIN"/>
</dbReference>
<dbReference type="GO" id="GO:0010001">
    <property type="term" value="P:glial cell differentiation"/>
    <property type="evidence" value="ECO:0000315"/>
    <property type="project" value="ZFIN"/>
</dbReference>
<dbReference type="GO" id="GO:0021986">
    <property type="term" value="P:habenula development"/>
    <property type="evidence" value="ECO:0000315"/>
    <property type="project" value="ZFIN"/>
</dbReference>
<dbReference type="GO" id="GO:0035315">
    <property type="term" value="P:hair cell differentiation"/>
    <property type="evidence" value="ECO:0000315"/>
    <property type="project" value="ZFIN"/>
</dbReference>
<dbReference type="GO" id="GO:0007507">
    <property type="term" value="P:heart development"/>
    <property type="evidence" value="ECO:0000315"/>
    <property type="project" value="ZFIN"/>
</dbReference>
<dbReference type="GO" id="GO:0002244">
    <property type="term" value="P:hematopoietic progenitor cell differentiation"/>
    <property type="evidence" value="ECO:0000315"/>
    <property type="project" value="ZFIN"/>
</dbReference>
<dbReference type="GO" id="GO:0060218">
    <property type="term" value="P:hematopoietic stem cell differentiation"/>
    <property type="evidence" value="ECO:0000315"/>
    <property type="project" value="ZFIN"/>
</dbReference>
<dbReference type="GO" id="GO:0030097">
    <property type="term" value="P:hemopoiesis"/>
    <property type="evidence" value="ECO:0000315"/>
    <property type="project" value="ZFIN"/>
</dbReference>
<dbReference type="GO" id="GO:0030902">
    <property type="term" value="P:hindbrain development"/>
    <property type="evidence" value="ECO:0000315"/>
    <property type="project" value="ZFIN"/>
</dbReference>
<dbReference type="GO" id="GO:0060113">
    <property type="term" value="P:inner ear receptor cell differentiation"/>
    <property type="evidence" value="ECO:0000315"/>
    <property type="project" value="ZFIN"/>
</dbReference>
<dbReference type="GO" id="GO:0048892">
    <property type="term" value="P:lateral line nerve development"/>
    <property type="evidence" value="ECO:0000315"/>
    <property type="project" value="ZFIN"/>
</dbReference>
<dbReference type="GO" id="GO:0030318">
    <property type="term" value="P:melanocyte differentiation"/>
    <property type="evidence" value="ECO:0000315"/>
    <property type="project" value="ZFIN"/>
</dbReference>
<dbReference type="GO" id="GO:0003407">
    <property type="term" value="P:neural retina development"/>
    <property type="evidence" value="ECO:0000315"/>
    <property type="project" value="ZFIN"/>
</dbReference>
<dbReference type="GO" id="GO:0022008">
    <property type="term" value="P:neurogenesis"/>
    <property type="evidence" value="ECO:0000315"/>
    <property type="project" value="ZFIN"/>
</dbReference>
<dbReference type="GO" id="GO:0048666">
    <property type="term" value="P:neuron development"/>
    <property type="evidence" value="ECO:0000315"/>
    <property type="project" value="ZFIN"/>
</dbReference>
<dbReference type="GO" id="GO:0030182">
    <property type="term" value="P:neuron differentiation"/>
    <property type="evidence" value="ECO:0000315"/>
    <property type="project" value="ZFIN"/>
</dbReference>
<dbReference type="GO" id="GO:0048663">
    <property type="term" value="P:neuron fate commitment"/>
    <property type="evidence" value="ECO:0000315"/>
    <property type="project" value="ZFIN"/>
</dbReference>
<dbReference type="GO" id="GO:0048665">
    <property type="term" value="P:neuron fate specification"/>
    <property type="evidence" value="ECO:0000315"/>
    <property type="project" value="ZFIN"/>
</dbReference>
<dbReference type="GO" id="GO:0007219">
    <property type="term" value="P:Notch signaling pathway"/>
    <property type="evidence" value="ECO:0000315"/>
    <property type="project" value="ZFIN"/>
</dbReference>
<dbReference type="GO" id="GO:0060035">
    <property type="term" value="P:notochord cell development"/>
    <property type="evidence" value="ECO:0000315"/>
    <property type="project" value="ZFIN"/>
</dbReference>
<dbReference type="GO" id="GO:0030903">
    <property type="term" value="P:notochord development"/>
    <property type="evidence" value="ECO:0000315"/>
    <property type="project" value="ZFIN"/>
</dbReference>
<dbReference type="GO" id="GO:0003408">
    <property type="term" value="P:optic cup formation involved in camera-type eye development"/>
    <property type="evidence" value="ECO:0000315"/>
    <property type="project" value="ZFIN"/>
</dbReference>
<dbReference type="GO" id="GO:0071599">
    <property type="term" value="P:otic vesicle development"/>
    <property type="evidence" value="ECO:0000315"/>
    <property type="project" value="ZFIN"/>
</dbReference>
<dbReference type="GO" id="GO:0050931">
    <property type="term" value="P:pigment cell differentiation"/>
    <property type="evidence" value="ECO:0000315"/>
    <property type="project" value="ZFIN"/>
</dbReference>
<dbReference type="GO" id="GO:0008284">
    <property type="term" value="P:positive regulation of cell population proliferation"/>
    <property type="evidence" value="ECO:0000316"/>
    <property type="project" value="ZFIN"/>
</dbReference>
<dbReference type="GO" id="GO:0045747">
    <property type="term" value="P:positive regulation of Notch signaling pathway"/>
    <property type="evidence" value="ECO:0000315"/>
    <property type="project" value="ZFIN"/>
</dbReference>
<dbReference type="GO" id="GO:0031398">
    <property type="term" value="P:positive regulation of protein ubiquitination"/>
    <property type="evidence" value="ECO:0000353"/>
    <property type="project" value="ZFIN"/>
</dbReference>
<dbReference type="GO" id="GO:0048916">
    <property type="term" value="P:posterior lateral line development"/>
    <property type="evidence" value="ECO:0000315"/>
    <property type="project" value="ZFIN"/>
</dbReference>
<dbReference type="GO" id="GO:0048920">
    <property type="term" value="P:posterior lateral line neuromast primordium migration"/>
    <property type="evidence" value="ECO:0000316"/>
    <property type="project" value="ZFIN"/>
</dbReference>
<dbReference type="GO" id="GO:0039022">
    <property type="term" value="P:pronephric duct development"/>
    <property type="evidence" value="ECO:0000315"/>
    <property type="project" value="ZFIN"/>
</dbReference>
<dbReference type="GO" id="GO:0048793">
    <property type="term" value="P:pronephros development"/>
    <property type="evidence" value="ECO:0000315"/>
    <property type="project" value="ZFIN"/>
</dbReference>
<dbReference type="GO" id="GO:0051865">
    <property type="term" value="P:protein autoubiquitination"/>
    <property type="evidence" value="ECO:0000314"/>
    <property type="project" value="ZFIN"/>
</dbReference>
<dbReference type="GO" id="GO:0016567">
    <property type="term" value="P:protein ubiquitination"/>
    <property type="evidence" value="ECO:0000314"/>
    <property type="project" value="ZFIN"/>
</dbReference>
<dbReference type="GO" id="GO:0045685">
    <property type="term" value="P:regulation of glial cell differentiation"/>
    <property type="evidence" value="ECO:0000315"/>
    <property type="project" value="ZFIN"/>
</dbReference>
<dbReference type="GO" id="GO:0045664">
    <property type="term" value="P:regulation of neuron differentiation"/>
    <property type="evidence" value="ECO:0000315"/>
    <property type="project" value="ZFIN"/>
</dbReference>
<dbReference type="GO" id="GO:0008593">
    <property type="term" value="P:regulation of Notch signaling pathway"/>
    <property type="evidence" value="ECO:0000315"/>
    <property type="project" value="ZFIN"/>
</dbReference>
<dbReference type="GO" id="GO:0002090">
    <property type="term" value="P:regulation of receptor internalization"/>
    <property type="evidence" value="ECO:0000314"/>
    <property type="project" value="ZFIN"/>
</dbReference>
<dbReference type="GO" id="GO:0048259">
    <property type="term" value="P:regulation of receptor-mediated endocytosis"/>
    <property type="evidence" value="ECO:0000315"/>
    <property type="project" value="ZFIN"/>
</dbReference>
<dbReference type="GO" id="GO:0021654">
    <property type="term" value="P:rhombomere boundary formation"/>
    <property type="evidence" value="ECO:0000315"/>
    <property type="project" value="ZFIN"/>
</dbReference>
<dbReference type="GO" id="GO:0021546">
    <property type="term" value="P:rhombomere development"/>
    <property type="evidence" value="ECO:0000315"/>
    <property type="project" value="ZFIN"/>
</dbReference>
<dbReference type="GO" id="GO:0001756">
    <property type="term" value="P:somitogenesis"/>
    <property type="evidence" value="ECO:0000315"/>
    <property type="project" value="ZFIN"/>
</dbReference>
<dbReference type="GO" id="GO:0021519">
    <property type="term" value="P:spinal cord association neuron specification"/>
    <property type="evidence" value="ECO:0000315"/>
    <property type="project" value="ZFIN"/>
</dbReference>
<dbReference type="GO" id="GO:0021510">
    <property type="term" value="P:spinal cord development"/>
    <property type="evidence" value="ECO:0000315"/>
    <property type="project" value="ZFIN"/>
</dbReference>
<dbReference type="GO" id="GO:0021520">
    <property type="term" value="P:spinal cord motor neuron cell fate specification"/>
    <property type="evidence" value="ECO:0000315"/>
    <property type="project" value="ZFIN"/>
</dbReference>
<dbReference type="GO" id="GO:0002040">
    <property type="term" value="P:sprouting angiogenesis"/>
    <property type="evidence" value="ECO:0000316"/>
    <property type="project" value="ZFIN"/>
</dbReference>
<dbReference type="GO" id="GO:0061195">
    <property type="term" value="P:taste bud formation"/>
    <property type="evidence" value="ECO:0000315"/>
    <property type="project" value="ZFIN"/>
</dbReference>
<dbReference type="GO" id="GO:0061551">
    <property type="term" value="P:trigeminal ganglion development"/>
    <property type="evidence" value="ECO:0000315"/>
    <property type="project" value="ZFIN"/>
</dbReference>
<dbReference type="GO" id="GO:0070086">
    <property type="term" value="P:ubiquitin-dependent endocytosis"/>
    <property type="evidence" value="ECO:0000353"/>
    <property type="project" value="ZFIN"/>
</dbReference>
<dbReference type="GO" id="GO:0001570">
    <property type="term" value="P:vasculogenesis"/>
    <property type="evidence" value="ECO:0000315"/>
    <property type="project" value="ZFIN"/>
</dbReference>
<dbReference type="GO" id="GO:0021514">
    <property type="term" value="P:ventral spinal cord interneuron differentiation"/>
    <property type="evidence" value="ECO:0000315"/>
    <property type="project" value="ZFIN"/>
</dbReference>
<dbReference type="GO" id="GO:0021521">
    <property type="term" value="P:ventral spinal cord interneuron specification"/>
    <property type="evidence" value="ECO:0000315"/>
    <property type="project" value="ZFIN"/>
</dbReference>
<dbReference type="CDD" id="cd16724">
    <property type="entry name" value="RING-HC_MIB1_rpt1"/>
    <property type="match status" value="1"/>
</dbReference>
<dbReference type="CDD" id="cd16725">
    <property type="entry name" value="RING-HC_MIB1_rpt2"/>
    <property type="match status" value="1"/>
</dbReference>
<dbReference type="CDD" id="cd16727">
    <property type="entry name" value="RING-HC_MIB1_rpt3"/>
    <property type="match status" value="1"/>
</dbReference>
<dbReference type="CDD" id="cd02339">
    <property type="entry name" value="ZZ_Mind_bomb"/>
    <property type="match status" value="1"/>
</dbReference>
<dbReference type="FunFam" id="1.25.40.20:FF:000059">
    <property type="entry name" value="E3 ubiquitin-protein ligase MIB1 isoform X1"/>
    <property type="match status" value="1"/>
</dbReference>
<dbReference type="FunFam" id="1.25.40.20:FF:000191">
    <property type="entry name" value="E3 ubiquitin-protein ligase MIB1 isoform X1"/>
    <property type="match status" value="1"/>
</dbReference>
<dbReference type="FunFam" id="2.30.30.40:FF:000090">
    <property type="entry name" value="E3 ubiquitin-protein ligase MIB1 isoform X1"/>
    <property type="match status" value="1"/>
</dbReference>
<dbReference type="FunFam" id="3.30.40.10:FF:000083">
    <property type="entry name" value="E3 ubiquitin-protein ligase MIB1 isoform X1"/>
    <property type="match status" value="1"/>
</dbReference>
<dbReference type="FunFam" id="3.30.40.10:FF:000085">
    <property type="entry name" value="E3 ubiquitin-protein ligase MIB1 isoform X1"/>
    <property type="match status" value="1"/>
</dbReference>
<dbReference type="FunFam" id="3.30.40.10:FF:000135">
    <property type="entry name" value="E3 ubiquitin-protein ligase mib1 isoform X1"/>
    <property type="match status" value="1"/>
</dbReference>
<dbReference type="FunFam" id="3.30.60.90:FF:000005">
    <property type="entry name" value="Putative E3 ubiquitin-protein ligase mib1"/>
    <property type="match status" value="1"/>
</dbReference>
<dbReference type="FunFam" id="2.30.30.40:FF:000054">
    <property type="entry name" value="Putative e3 ubiquitin-protein ligase mind-bomb"/>
    <property type="match status" value="1"/>
</dbReference>
<dbReference type="Gene3D" id="3.30.60.90">
    <property type="match status" value="1"/>
</dbReference>
<dbReference type="Gene3D" id="1.25.40.20">
    <property type="entry name" value="Ankyrin repeat-containing domain"/>
    <property type="match status" value="3"/>
</dbReference>
<dbReference type="Gene3D" id="2.30.30.40">
    <property type="entry name" value="SH3 Domains"/>
    <property type="match status" value="2"/>
</dbReference>
<dbReference type="Gene3D" id="3.30.40.10">
    <property type="entry name" value="Zinc/RING finger domain, C3HC4 (zinc finger)"/>
    <property type="match status" value="3"/>
</dbReference>
<dbReference type="InterPro" id="IPR002110">
    <property type="entry name" value="Ankyrin_rpt"/>
</dbReference>
<dbReference type="InterPro" id="IPR036770">
    <property type="entry name" value="Ankyrin_rpt-contain_sf"/>
</dbReference>
<dbReference type="InterPro" id="IPR042056">
    <property type="entry name" value="MIB1/2_ZZ"/>
</dbReference>
<dbReference type="InterPro" id="IPR010606">
    <property type="entry name" value="Mib_Herc2"/>
</dbReference>
<dbReference type="InterPro" id="IPR037252">
    <property type="entry name" value="Mib_Herc2_sf"/>
</dbReference>
<dbReference type="InterPro" id="IPR040847">
    <property type="entry name" value="SH3_15"/>
</dbReference>
<dbReference type="InterPro" id="IPR001841">
    <property type="entry name" value="Znf_RING"/>
</dbReference>
<dbReference type="InterPro" id="IPR013083">
    <property type="entry name" value="Znf_RING/FYVE/PHD"/>
</dbReference>
<dbReference type="InterPro" id="IPR000433">
    <property type="entry name" value="Znf_ZZ"/>
</dbReference>
<dbReference type="InterPro" id="IPR043145">
    <property type="entry name" value="Znf_ZZ_sf"/>
</dbReference>
<dbReference type="PANTHER" id="PTHR24202:SF53">
    <property type="entry name" value="E3 UBIQUITIN-PROTEIN LIGASE MIB1"/>
    <property type="match status" value="1"/>
</dbReference>
<dbReference type="PANTHER" id="PTHR24202">
    <property type="entry name" value="E3 UBIQUITIN-PROTEIN LIGASE MIB2"/>
    <property type="match status" value="1"/>
</dbReference>
<dbReference type="Pfam" id="PF00023">
    <property type="entry name" value="Ank"/>
    <property type="match status" value="1"/>
</dbReference>
<dbReference type="Pfam" id="PF12796">
    <property type="entry name" value="Ank_2"/>
    <property type="match status" value="2"/>
</dbReference>
<dbReference type="Pfam" id="PF06701">
    <property type="entry name" value="MIB_HERC2"/>
    <property type="match status" value="2"/>
</dbReference>
<dbReference type="Pfam" id="PF18346">
    <property type="entry name" value="SH3_15"/>
    <property type="match status" value="2"/>
</dbReference>
<dbReference type="Pfam" id="PF13920">
    <property type="entry name" value="zf-C3HC4_3"/>
    <property type="match status" value="3"/>
</dbReference>
<dbReference type="Pfam" id="PF00569">
    <property type="entry name" value="ZZ"/>
    <property type="match status" value="1"/>
</dbReference>
<dbReference type="PRINTS" id="PR01415">
    <property type="entry name" value="ANKYRIN"/>
</dbReference>
<dbReference type="SMART" id="SM00248">
    <property type="entry name" value="ANK"/>
    <property type="match status" value="8"/>
</dbReference>
<dbReference type="SMART" id="SM00184">
    <property type="entry name" value="RING"/>
    <property type="match status" value="3"/>
</dbReference>
<dbReference type="SMART" id="SM00291">
    <property type="entry name" value="ZnF_ZZ"/>
    <property type="match status" value="1"/>
</dbReference>
<dbReference type="SUPFAM" id="SSF48403">
    <property type="entry name" value="Ankyrin repeat"/>
    <property type="match status" value="1"/>
</dbReference>
<dbReference type="SUPFAM" id="SSF159034">
    <property type="entry name" value="Mib/herc2 domain-like"/>
    <property type="match status" value="2"/>
</dbReference>
<dbReference type="SUPFAM" id="SSF57850">
    <property type="entry name" value="RING/U-box"/>
    <property type="match status" value="2"/>
</dbReference>
<dbReference type="PROSITE" id="PS50297">
    <property type="entry name" value="ANK_REP_REGION"/>
    <property type="match status" value="1"/>
</dbReference>
<dbReference type="PROSITE" id="PS50088">
    <property type="entry name" value="ANK_REPEAT"/>
    <property type="match status" value="6"/>
</dbReference>
<dbReference type="PROSITE" id="PS51416">
    <property type="entry name" value="MIB_HERC2"/>
    <property type="match status" value="2"/>
</dbReference>
<dbReference type="PROSITE" id="PS50089">
    <property type="entry name" value="ZF_RING_2"/>
    <property type="match status" value="3"/>
</dbReference>
<dbReference type="PROSITE" id="PS01357">
    <property type="entry name" value="ZF_ZZ_1"/>
    <property type="match status" value="1"/>
</dbReference>
<dbReference type="PROSITE" id="PS50135">
    <property type="entry name" value="ZF_ZZ_2"/>
    <property type="match status" value="1"/>
</dbReference>
<evidence type="ECO:0000250" key="1"/>
<evidence type="ECO:0000255" key="2"/>
<evidence type="ECO:0000255" key="3">
    <source>
        <dbReference type="PROSITE-ProRule" id="PRU00175"/>
    </source>
</evidence>
<evidence type="ECO:0000255" key="4">
    <source>
        <dbReference type="PROSITE-ProRule" id="PRU00228"/>
    </source>
</evidence>
<evidence type="ECO:0000255" key="5">
    <source>
        <dbReference type="PROSITE-ProRule" id="PRU00749"/>
    </source>
</evidence>
<evidence type="ECO:0000269" key="6">
    <source>
    </source>
</evidence>
<evidence type="ECO:0000269" key="7">
    <source>
    </source>
</evidence>
<evidence type="ECO:0000269" key="8">
    <source>
    </source>
</evidence>
<evidence type="ECO:0000269" key="9">
    <source>
    </source>
</evidence>
<evidence type="ECO:0000269" key="10">
    <source>
    </source>
</evidence>
<evidence type="ECO:0000269" key="11">
    <source>
    </source>
</evidence>
<evidence type="ECO:0000269" key="12">
    <source>
    </source>
</evidence>
<evidence type="ECO:0000305" key="13"/>
<gene>
    <name type="primary">mib1</name>
    <name type="synonym">mib</name>
</gene>
<organism>
    <name type="scientific">Danio rerio</name>
    <name type="common">Zebrafish</name>
    <name type="synonym">Brachydanio rerio</name>
    <dbReference type="NCBI Taxonomy" id="7955"/>
    <lineage>
        <taxon>Eukaryota</taxon>
        <taxon>Metazoa</taxon>
        <taxon>Chordata</taxon>
        <taxon>Craniata</taxon>
        <taxon>Vertebrata</taxon>
        <taxon>Euteleostomi</taxon>
        <taxon>Actinopterygii</taxon>
        <taxon>Neopterygii</taxon>
        <taxon>Teleostei</taxon>
        <taxon>Ostariophysi</taxon>
        <taxon>Cypriniformes</taxon>
        <taxon>Danionidae</taxon>
        <taxon>Danioninae</taxon>
        <taxon>Danio</taxon>
    </lineage>
</organism>
<proteinExistence type="evidence at protein level"/>
<name>MIB1_DANRE</name>
<accession>Q804S5</accession>
<accession>Q8JHG3</accession>
<protein>
    <recommendedName>
        <fullName>E3 ubiquitin-protein ligase mib1</fullName>
        <ecNumber>2.3.2.27</ecNumber>
    </recommendedName>
    <alternativeName>
        <fullName>Protein mind bomb</fullName>
    </alternativeName>
    <alternativeName>
        <fullName evidence="13">RING-type E3 ubiquitin transferase mib1</fullName>
    </alternativeName>
</protein>
<comment type="function">
    <text evidence="6 7 8 9 10 11 12">E3 ubiquitin-protein ligase that mediates ubiquitination of Delta receptors, which act as ligands of Notch proteins. Positively regulates the Delta-mediated Notch signaling by ubiquitinating the intracellular domain of Delta, leading to endocytosis of Delta receptors. It thereby participates in many processes regulated by the Notch signaling pathway, such as midline cell fate specification prior to germ layer formation, patterning of sensory cell differentiation in the ear, neurogenesis of the hindbrain and commitment to a secretory fate in the intestine. Essential for early embryonic development.</text>
</comment>
<comment type="catalytic activity">
    <reaction>
        <text>S-ubiquitinyl-[E2 ubiquitin-conjugating enzyme]-L-cysteine + [acceptor protein]-L-lysine = [E2 ubiquitin-conjugating enzyme]-L-cysteine + N(6)-ubiquitinyl-[acceptor protein]-L-lysine.</text>
        <dbReference type="EC" id="2.3.2.27"/>
    </reaction>
</comment>
<comment type="pathway">
    <text>Protein modification; protein ubiquitination.</text>
</comment>
<comment type="subunit">
    <text evidence="8 10">Interacts with deltaA (dla) and deltaD (dld).</text>
</comment>
<comment type="subcellular location">
    <subcellularLocation>
        <location evidence="1">Cytoplasm</location>
        <location evidence="1">Cytoskeleton</location>
        <location evidence="1">Microtubule organizing center</location>
        <location evidence="1">Centrosome</location>
        <location evidence="1">Centriolar satellite</location>
    </subcellularLocation>
    <subcellularLocation>
        <location>Cytoplasm</location>
    </subcellularLocation>
    <subcellularLocation>
        <location>Cell membrane</location>
    </subcellularLocation>
    <text>Localizes to the plasma membrane.</text>
</comment>
<comment type="domain">
    <text evidence="10">The N-terminal domain (1-440) mediates the interaction with Delta receptors.</text>
</comment>
<comment type="domain">
    <text evidence="10">The ANK repeats are involved in Delta receptor internalization.</text>
</comment>
<comment type="domain">
    <text evidence="10">The RING fingers mediate the E3 ligase activity. The third RING finger probably plays a central role in this process. The role of the other RING fingers remains unclear.</text>
</comment>
<comment type="disruption phenotype">
    <text evidence="7">Mutants have a disorganized brain and neural tube, bent tail and very small or absent otoliths.</text>
</comment>
<reference key="1">
    <citation type="journal article" date="2003" name="Dev. Cell">
        <title>Mind bomb is a ubiquitin ligase that is essential for efficient activation of Notch signaling by Delta.</title>
        <authorList>
            <person name="Itoh M."/>
            <person name="Kim C.-H."/>
            <person name="Palardy G."/>
            <person name="Oda T."/>
            <person name="Jiang Y.-J."/>
            <person name="Maust D."/>
            <person name="Yeo S.-Y."/>
            <person name="Lorick K."/>
            <person name="Wright G.J."/>
            <person name="Ariza-McNaughton L."/>
            <person name="Weissman A.M."/>
            <person name="Lewis J."/>
            <person name="Chandrasekharappa S.C."/>
            <person name="Chitnis A.B."/>
        </authorList>
    </citation>
    <scope>NUCLEOTIDE SEQUENCE [MRNA]</scope>
    <scope>ENZYME ACTIVITY</scope>
    <scope>FUNCTION</scope>
    <scope>SUBCELLULAR LOCATION</scope>
    <scope>INTERACTION WITH DLD</scope>
    <scope>MUTAGENESIS OF CYS-1009 AND MET-1013</scope>
</reference>
<reference key="2">
    <citation type="journal article" date="2002" name="Nat. Genet.">
        <title>Insertional mutagenesis in zebrafish rapidly identifies genes essential for early vertebrate development.</title>
        <authorList>
            <person name="Golling G."/>
            <person name="Amsterdam A."/>
            <person name="Sun Z."/>
            <person name="Antonelli M."/>
            <person name="Maldonado E."/>
            <person name="Chen W."/>
            <person name="Burgess S."/>
            <person name="Haldi M."/>
            <person name="Artzt K."/>
            <person name="Farrington S."/>
            <person name="Lin S.-Y."/>
            <person name="Nissen R.M."/>
            <person name="Hopkins N."/>
        </authorList>
    </citation>
    <scope>NUCLEOTIDE SEQUENCE [LARGE SCALE MRNA] OF 1-237</scope>
    <scope>FUNCTION</scope>
    <scope>DISRUPTION PHENOTYPE</scope>
    <source>
        <tissue>Embryo</tissue>
    </source>
</reference>
<reference key="3">
    <citation type="journal article" date="1998" name="Development">
        <title>Delta-Notch signalling and the patterning of sensory cell differentiation in the zebrafish ear: evidence from the mind bomb mutant.</title>
        <authorList>
            <person name="Haddon C."/>
            <person name="Jiang Y.-J."/>
            <person name="Smithers L."/>
            <person name="Lewis J."/>
        </authorList>
    </citation>
    <scope>FUNCTION</scope>
</reference>
<reference key="4">
    <citation type="journal article" date="1999" name="Curr. Biol.">
        <title>Delta-mediated specification of midline cell fates in zebrafish embryos.</title>
        <authorList>
            <person name="Appel B."/>
            <person name="Fritz A."/>
            <person name="Westerfield M."/>
            <person name="Grunwald D.J."/>
            <person name="Eisen J.S."/>
            <person name="Riley B.B."/>
        </authorList>
    </citation>
    <scope>FUNCTION</scope>
</reference>
<reference key="5">
    <citation type="journal article" date="2004" name="Dev. Biol.">
        <title>Three modules of zebrafish Mind bomb work cooperatively to promote Delta ubiquitination and endocytosis.</title>
        <authorList>
            <person name="Chen W."/>
            <person name="Corliss D.C."/>
        </authorList>
    </citation>
    <scope>FUNCTION</scope>
    <scope>SUBCELLULAR LOCATION</scope>
    <scope>DOMAIN</scope>
    <scope>INTERACTION WITH DLA AND DLD</scope>
</reference>
<reference key="6">
    <citation type="journal article" date="2003" name="Dev. Dyn.">
        <title>Neurogenic phenotype of mind bomb mutants leads to severe patterning defects in the zebrafish hindbrain.</title>
        <authorList>
            <person name="Bingham S."/>
            <person name="Chaudhari S."/>
            <person name="Vanderlaan G."/>
            <person name="Itoh M."/>
            <person name="Chitnis A."/>
            <person name="Chandrasekhar A."/>
        </authorList>
    </citation>
    <scope>FUNCTION</scope>
</reference>
<reference key="7">
    <citation type="journal article" date="2005" name="Development">
        <title>Delta-Notch signalling controls commitment to a secretory fate in the zebrafish intestine.</title>
        <authorList>
            <person name="Crosnier C."/>
            <person name="Vargesson N."/>
            <person name="Gschmeissner S."/>
            <person name="Ariza-McNaughton L."/>
            <person name="Morrison A."/>
            <person name="Lewis J."/>
        </authorList>
    </citation>
    <scope>FUNCTION</scope>
</reference>
<keyword id="KW-0040">ANK repeat</keyword>
<keyword id="KW-1003">Cell membrane</keyword>
<keyword id="KW-0175">Coiled coil</keyword>
<keyword id="KW-0963">Cytoplasm</keyword>
<keyword id="KW-0206">Cytoskeleton</keyword>
<keyword id="KW-0217">Developmental protein</keyword>
<keyword id="KW-0472">Membrane</keyword>
<keyword id="KW-0479">Metal-binding</keyword>
<keyword id="KW-0914">Notch signaling pathway</keyword>
<keyword id="KW-1185">Reference proteome</keyword>
<keyword id="KW-0677">Repeat</keyword>
<keyword id="KW-0808">Transferase</keyword>
<keyword id="KW-0833">Ubl conjugation pathway</keyword>
<keyword id="KW-0862">Zinc</keyword>
<keyword id="KW-0863">Zinc-finger</keyword>